<accession>A9A0L3</accession>
<reference key="1">
    <citation type="submission" date="2007-10" db="EMBL/GenBank/DDBJ databases">
        <title>Complete sequence of Desulfococcus oleovorans Hxd3.</title>
        <authorList>
            <consortium name="US DOE Joint Genome Institute"/>
            <person name="Copeland A."/>
            <person name="Lucas S."/>
            <person name="Lapidus A."/>
            <person name="Barry K."/>
            <person name="Glavina del Rio T."/>
            <person name="Dalin E."/>
            <person name="Tice H."/>
            <person name="Pitluck S."/>
            <person name="Kiss H."/>
            <person name="Brettin T."/>
            <person name="Bruce D."/>
            <person name="Detter J.C."/>
            <person name="Han C."/>
            <person name="Schmutz J."/>
            <person name="Larimer F."/>
            <person name="Land M."/>
            <person name="Hauser L."/>
            <person name="Kyrpides N."/>
            <person name="Kim E."/>
            <person name="Wawrik B."/>
            <person name="Richardson P."/>
        </authorList>
    </citation>
    <scope>NUCLEOTIDE SEQUENCE [LARGE SCALE GENOMIC DNA]</scope>
    <source>
        <strain>DSM 6200 / JCM 39069 / Hxd3</strain>
    </source>
</reference>
<proteinExistence type="inferred from homology"/>
<comment type="function">
    <text evidence="1">Involved in DNA repair and RecF pathway recombination.</text>
</comment>
<comment type="similarity">
    <text evidence="1">Belongs to the RecO family.</text>
</comment>
<dbReference type="EMBL" id="CP000859">
    <property type="protein sequence ID" value="ABW67513.1"/>
    <property type="molecule type" value="Genomic_DNA"/>
</dbReference>
<dbReference type="RefSeq" id="WP_012175129.1">
    <property type="nucleotide sequence ID" value="NC_009943.1"/>
</dbReference>
<dbReference type="SMR" id="A9A0L3"/>
<dbReference type="STRING" id="96561.Dole_1709"/>
<dbReference type="KEGG" id="dol:Dole_1709"/>
<dbReference type="eggNOG" id="COG1381">
    <property type="taxonomic scope" value="Bacteria"/>
</dbReference>
<dbReference type="HOGENOM" id="CLU_066632_2_1_7"/>
<dbReference type="OrthoDB" id="9780797at2"/>
<dbReference type="Proteomes" id="UP000008561">
    <property type="component" value="Chromosome"/>
</dbReference>
<dbReference type="GO" id="GO:0043590">
    <property type="term" value="C:bacterial nucleoid"/>
    <property type="evidence" value="ECO:0007669"/>
    <property type="project" value="TreeGrafter"/>
</dbReference>
<dbReference type="GO" id="GO:0006310">
    <property type="term" value="P:DNA recombination"/>
    <property type="evidence" value="ECO:0007669"/>
    <property type="project" value="UniProtKB-UniRule"/>
</dbReference>
<dbReference type="GO" id="GO:0006302">
    <property type="term" value="P:double-strand break repair"/>
    <property type="evidence" value="ECO:0007669"/>
    <property type="project" value="TreeGrafter"/>
</dbReference>
<dbReference type="Gene3D" id="2.40.50.140">
    <property type="entry name" value="Nucleic acid-binding proteins"/>
    <property type="match status" value="1"/>
</dbReference>
<dbReference type="Gene3D" id="1.20.1440.120">
    <property type="entry name" value="Recombination protein O, C-terminal domain"/>
    <property type="match status" value="1"/>
</dbReference>
<dbReference type="HAMAP" id="MF_00201">
    <property type="entry name" value="RecO"/>
    <property type="match status" value="1"/>
</dbReference>
<dbReference type="InterPro" id="IPR037278">
    <property type="entry name" value="ARFGAP/RecO"/>
</dbReference>
<dbReference type="InterPro" id="IPR022572">
    <property type="entry name" value="DNA_rep/recomb_RecO_N"/>
</dbReference>
<dbReference type="InterPro" id="IPR012340">
    <property type="entry name" value="NA-bd_OB-fold"/>
</dbReference>
<dbReference type="InterPro" id="IPR003717">
    <property type="entry name" value="RecO"/>
</dbReference>
<dbReference type="InterPro" id="IPR042242">
    <property type="entry name" value="RecO_C"/>
</dbReference>
<dbReference type="NCBIfam" id="TIGR00613">
    <property type="entry name" value="reco"/>
    <property type="match status" value="1"/>
</dbReference>
<dbReference type="PANTHER" id="PTHR33991">
    <property type="entry name" value="DNA REPAIR PROTEIN RECO"/>
    <property type="match status" value="1"/>
</dbReference>
<dbReference type="PANTHER" id="PTHR33991:SF1">
    <property type="entry name" value="DNA REPAIR PROTEIN RECO"/>
    <property type="match status" value="1"/>
</dbReference>
<dbReference type="Pfam" id="PF02565">
    <property type="entry name" value="RecO_C"/>
    <property type="match status" value="1"/>
</dbReference>
<dbReference type="Pfam" id="PF11967">
    <property type="entry name" value="RecO_N"/>
    <property type="match status" value="1"/>
</dbReference>
<dbReference type="SUPFAM" id="SSF57863">
    <property type="entry name" value="ArfGap/RecO-like zinc finger"/>
    <property type="match status" value="1"/>
</dbReference>
<dbReference type="SUPFAM" id="SSF50249">
    <property type="entry name" value="Nucleic acid-binding proteins"/>
    <property type="match status" value="1"/>
</dbReference>
<sequence>MPGFSSPAIILRRTAYAEYDTILDLLTLERGRITAMAKNARKSKKRFAGILEPFCCLDAVFTDPSARSGMTILKEAAMTAPFGAIRLNMEKVAYASYWSEMVNRWVKEDDTQSALFHLLHYVLFMLDSGKASHADLSILFQVRFMTLAGLFPGMAACRVCKTEIDRLSGSPTLYLDIARGGIVCHRCGGEGAGSQYRKPLSRGLVKQFLWVRETDLPQAERMRFTAAAREQGLAALEAFVTYHLAMEIKSLKVLQRIRHW</sequence>
<keyword id="KW-0227">DNA damage</keyword>
<keyword id="KW-0233">DNA recombination</keyword>
<keyword id="KW-0234">DNA repair</keyword>
<keyword id="KW-1185">Reference proteome</keyword>
<feature type="chain" id="PRO_1000118715" description="DNA repair protein RecO">
    <location>
        <begin position="1"/>
        <end position="260"/>
    </location>
</feature>
<name>RECO_DESOH</name>
<protein>
    <recommendedName>
        <fullName evidence="1">DNA repair protein RecO</fullName>
    </recommendedName>
    <alternativeName>
        <fullName evidence="1">Recombination protein O</fullName>
    </alternativeName>
</protein>
<evidence type="ECO:0000255" key="1">
    <source>
        <dbReference type="HAMAP-Rule" id="MF_00201"/>
    </source>
</evidence>
<organism>
    <name type="scientific">Desulfosudis oleivorans (strain DSM 6200 / JCM 39069 / Hxd3)</name>
    <name type="common">Desulfococcus oleovorans</name>
    <dbReference type="NCBI Taxonomy" id="96561"/>
    <lineage>
        <taxon>Bacteria</taxon>
        <taxon>Pseudomonadati</taxon>
        <taxon>Thermodesulfobacteriota</taxon>
        <taxon>Desulfobacteria</taxon>
        <taxon>Desulfobacterales</taxon>
        <taxon>Desulfosudaceae</taxon>
        <taxon>Desulfosudis</taxon>
    </lineage>
</organism>
<gene>
    <name evidence="1" type="primary">recO</name>
    <name type="ordered locus">Dole_1709</name>
</gene>